<gene>
    <name type="primary">NUP42</name>
    <name type="synonym">RIP1</name>
    <name type="synonym">UIP1</name>
    <name type="ordered locus">YDR192C</name>
    <name type="ORF">YD9346.04C</name>
</gene>
<sequence length="430" mass="42778">MSAFGNPFTSGAKPNLSNTSGINPFTNNAASTNNMGGSAFGRPSFGTANTMTGGTTTSAFGMPQFGTNTGNTGNTSISAFGNTSNAAKPSAFGAPAFGSSAPINVNPPSTTSAFGAPSFGSTGFGAMAATSNPFGKSPGSMGSAFGQPAFGANKTAIPSSSVSNSNNSAFGAASNTPLTTTSPFGSLQQNASQNASSTSSAFGKPTFGAATNTQSPFGTIQNTSTSSGTGVSPFGTFGTNSNNKSPFSNLQSGAGAGSSPFGTTTSKANNNNNVGSSAFGTTNNQSPFSGGSGGTFGSASNLNKNTNGNFQSSFGNKGFSFGITPQNDANKVSQSNPSFGQTMPNTDPNISLKSNGNATSFGFGQQQMNATNVNANTATGKIRFVQGLSSEKDGILELADLAEETLKIFRANKFELGLVPDIPPPPALVA</sequence>
<accession>P49686</accession>
<accession>D6VSH5</accession>
<comment type="function">
    <text evidence="2 3 4 5 6 7 8 9 10">Functions as a component of the nuclear pore complex (NPC). NPC components, collectively referred to as nucleoporins (NUPs), can play the role of both NPC structural components and of docking or interaction partners for transiently associated nuclear transport factors. Active directional transport is assured by both, a Phe-Gly (FG) repeat affinity gradient for these transport factors across the NPC and a transport cofactor concentration gradient across the nuclear envelope (GSP1 and GSP2 GTPases associated predominantly with GTP in the nucleus, with GDP in the cytoplasm). NUP42 is specifically important for nuclear protein and mRNA export.</text>
</comment>
<comment type="subunit">
    <text evidence="2 3 4 6">Component of the nuclear pore complex (NPC) (PubMed:10684247). NPC constitutes the exclusive means of nucleocytoplasmic transport. NPCs allow the passive diffusion of ions and small molecules and the active, nuclear transport receptor-mediated bidirectional transport of macromolecules such as proteins, RNAs, ribonucleoparticles (RNPs), and ribosomal subunits across the nuclear envelope. Due to its 8-fold rotational symmetry, all subunits are present with 8 copies or multiples thereof. NUP42 interacts with the NUP82 subcomplex. It interacts directly with GLE1, and through its FG repeats with GFD1, the heterodimeric mRNA transport factor MEX67/MTR2, and the karyopherin CRM1.</text>
</comment>
<comment type="interaction">
    <interactant intactId="EBI-12310">
        <id>P49686</id>
    </interactant>
    <interactant intactId="EBI-7635">
        <id>Q12315</id>
        <label>GLE1</label>
    </interactant>
    <organismsDiffer>false</organismsDiffer>
    <experiments>7</experiments>
</comment>
<comment type="interaction">
    <interactant intactId="EBI-12310">
        <id>P49686</id>
    </interactant>
    <interactant intactId="EBI-9145">
        <id>Q06142</id>
        <label>KAP95</label>
    </interactant>
    <organismsDiffer>false</organismsDiffer>
    <experiments>2</experiments>
</comment>
<comment type="interaction">
    <interactant intactId="EBI-12310">
        <id>P49686</id>
    </interactant>
    <interactant intactId="EBI-11698">
        <id>Q02629</id>
        <label>NUP100</label>
    </interactant>
    <organismsDiffer>false</organismsDiffer>
    <experiments>2</experiments>
</comment>
<comment type="interaction">
    <interactant intactId="EBI-12310">
        <id>P49686</id>
    </interactant>
    <interactant intactId="EBI-11703">
        <id>Q02630</id>
        <label>NUP116</label>
    </interactant>
    <organismsDiffer>false</organismsDiffer>
    <experiments>2</experiments>
</comment>
<comment type="interaction">
    <interactant intactId="EBI-12310">
        <id>P49686</id>
    </interactant>
    <interactant intactId="EBI-12324">
        <id>P48837</id>
        <label>NUP57</label>
    </interactant>
    <organismsDiffer>false</organismsDiffer>
    <experiments>2</experiments>
</comment>
<comment type="subcellular location">
    <subcellularLocation>
        <location evidence="4">Nucleus</location>
        <location evidence="4">Nuclear pore complex</location>
    </subcellularLocation>
    <subcellularLocation>
        <location>Nucleus membrane</location>
        <topology>Peripheral membrane protein</topology>
        <orientation>Cytoplasmic side</orientation>
    </subcellularLocation>
</comment>
<comment type="domain">
    <text>Contains FG repeats. FG repeats are interaction sites for karyopherins (importins, exportins) and form probably an affinity gradient, guiding the transport proteins unidirectionally with their cargo through the NPC. FG repeat regions are highly flexible and lack ordered secondary structure. The overall conservation of FG repeats regarding exact sequence, spacing, and repeat unit length is limited. FG repeat types and their physico-chemical environment change across the NPC from the nucleoplasmic to the cytoplasmic side: SXFG/PXFG repeats are especially abundant in NUPs on the cytoplasmic side.</text>
</comment>
<keyword id="KW-0002">3D-structure</keyword>
<keyword id="KW-0472">Membrane</keyword>
<keyword id="KW-0509">mRNA transport</keyword>
<keyword id="KW-0906">Nuclear pore complex</keyword>
<keyword id="KW-0539">Nucleus</keyword>
<keyword id="KW-0597">Phosphoprotein</keyword>
<keyword id="KW-0653">Protein transport</keyword>
<keyword id="KW-1185">Reference proteome</keyword>
<keyword id="KW-0677">Repeat</keyword>
<keyword id="KW-0811">Translocation</keyword>
<keyword id="KW-0813">Transport</keyword>
<evidence type="ECO:0000256" key="1">
    <source>
        <dbReference type="SAM" id="MobiDB-lite"/>
    </source>
</evidence>
<evidence type="ECO:0000269" key="2">
    <source>
    </source>
</evidence>
<evidence type="ECO:0000269" key="3">
    <source>
    </source>
</evidence>
<evidence type="ECO:0000269" key="4">
    <source>
    </source>
</evidence>
<evidence type="ECO:0000269" key="5">
    <source>
    </source>
</evidence>
<evidence type="ECO:0000269" key="6">
    <source>
    </source>
</evidence>
<evidence type="ECO:0000269" key="7">
    <source>
    </source>
</evidence>
<evidence type="ECO:0000269" key="8">
    <source>
    </source>
</evidence>
<evidence type="ECO:0000269" key="9">
    <source>
    </source>
</evidence>
<evidence type="ECO:0000269" key="10">
    <source>
    </source>
</evidence>
<evidence type="ECO:0000305" key="11"/>
<evidence type="ECO:0007744" key="12">
    <source>
    </source>
</evidence>
<evidence type="ECO:0007829" key="13">
    <source>
        <dbReference type="PDB" id="6B4E"/>
    </source>
</evidence>
<organism>
    <name type="scientific">Saccharomyces cerevisiae (strain ATCC 204508 / S288c)</name>
    <name type="common">Baker's yeast</name>
    <dbReference type="NCBI Taxonomy" id="559292"/>
    <lineage>
        <taxon>Eukaryota</taxon>
        <taxon>Fungi</taxon>
        <taxon>Dikarya</taxon>
        <taxon>Ascomycota</taxon>
        <taxon>Saccharomycotina</taxon>
        <taxon>Saccharomycetes</taxon>
        <taxon>Saccharomycetales</taxon>
        <taxon>Saccharomycetaceae</taxon>
        <taxon>Saccharomyces</taxon>
    </lineage>
</organism>
<reference key="1">
    <citation type="journal article" date="1995" name="Cell">
        <title>Identification of a novel nuclear pore-associated protein as a functional target of the HIV-1 Rev protein in yeast.</title>
        <authorList>
            <person name="Stutz F."/>
            <person name="Neville M."/>
            <person name="Rosbash M."/>
        </authorList>
    </citation>
    <scope>NUCLEOTIDE SEQUENCE [GENOMIC DNA]</scope>
</reference>
<reference key="2">
    <citation type="journal article" date="1997" name="Nature">
        <title>The nucleotide sequence of Saccharomyces cerevisiae chromosome IV.</title>
        <authorList>
            <person name="Jacq C."/>
            <person name="Alt-Moerbe J."/>
            <person name="Andre B."/>
            <person name="Arnold W."/>
            <person name="Bahr A."/>
            <person name="Ballesta J.P.G."/>
            <person name="Bargues M."/>
            <person name="Baron L."/>
            <person name="Becker A."/>
            <person name="Biteau N."/>
            <person name="Bloecker H."/>
            <person name="Blugeon C."/>
            <person name="Boskovic J."/>
            <person name="Brandt P."/>
            <person name="Brueckner M."/>
            <person name="Buitrago M.J."/>
            <person name="Coster F."/>
            <person name="Delaveau T."/>
            <person name="del Rey F."/>
            <person name="Dujon B."/>
            <person name="Eide L.G."/>
            <person name="Garcia-Cantalejo J.M."/>
            <person name="Goffeau A."/>
            <person name="Gomez-Peris A."/>
            <person name="Granotier C."/>
            <person name="Hanemann V."/>
            <person name="Hankeln T."/>
            <person name="Hoheisel J.D."/>
            <person name="Jaeger W."/>
            <person name="Jimenez A."/>
            <person name="Jonniaux J.-L."/>
            <person name="Kraemer C."/>
            <person name="Kuester H."/>
            <person name="Laamanen P."/>
            <person name="Legros Y."/>
            <person name="Louis E.J."/>
            <person name="Moeller-Rieker S."/>
            <person name="Monnet A."/>
            <person name="Moro M."/>
            <person name="Mueller-Auer S."/>
            <person name="Nussbaumer B."/>
            <person name="Paricio N."/>
            <person name="Paulin L."/>
            <person name="Perea J."/>
            <person name="Perez-Alonso M."/>
            <person name="Perez-Ortin J.E."/>
            <person name="Pohl T.M."/>
            <person name="Prydz H."/>
            <person name="Purnelle B."/>
            <person name="Rasmussen S.W."/>
            <person name="Remacha M.A."/>
            <person name="Revuelta J.L."/>
            <person name="Rieger M."/>
            <person name="Salom D."/>
            <person name="Saluz H.P."/>
            <person name="Saiz J.E."/>
            <person name="Saren A.-M."/>
            <person name="Schaefer M."/>
            <person name="Scharfe M."/>
            <person name="Schmidt E.R."/>
            <person name="Schneider C."/>
            <person name="Scholler P."/>
            <person name="Schwarz S."/>
            <person name="Soler-Mira A."/>
            <person name="Urrestarazu L.A."/>
            <person name="Verhasselt P."/>
            <person name="Vissers S."/>
            <person name="Voet M."/>
            <person name="Volckaert G."/>
            <person name="Wagner G."/>
            <person name="Wambutt R."/>
            <person name="Wedler E."/>
            <person name="Wedler H."/>
            <person name="Woelfl S."/>
            <person name="Harris D.E."/>
            <person name="Bowman S."/>
            <person name="Brown D."/>
            <person name="Churcher C.M."/>
            <person name="Connor R."/>
            <person name="Dedman K."/>
            <person name="Gentles S."/>
            <person name="Hamlin N."/>
            <person name="Hunt S."/>
            <person name="Jones L."/>
            <person name="McDonald S."/>
            <person name="Murphy L.D."/>
            <person name="Niblett D."/>
            <person name="Odell C."/>
            <person name="Oliver K."/>
            <person name="Rajandream M.A."/>
            <person name="Richards C."/>
            <person name="Shore L."/>
            <person name="Walsh S.V."/>
            <person name="Barrell B.G."/>
            <person name="Dietrich F.S."/>
            <person name="Mulligan J.T."/>
            <person name="Allen E."/>
            <person name="Araujo R."/>
            <person name="Aviles E."/>
            <person name="Berno A."/>
            <person name="Carpenter J."/>
            <person name="Chen E."/>
            <person name="Cherry J.M."/>
            <person name="Chung E."/>
            <person name="Duncan M."/>
            <person name="Hunicke-Smith S."/>
            <person name="Hyman R.W."/>
            <person name="Komp C."/>
            <person name="Lashkari D."/>
            <person name="Lew H."/>
            <person name="Lin D."/>
            <person name="Mosedale D."/>
            <person name="Nakahara K."/>
            <person name="Namath A."/>
            <person name="Oefner P."/>
            <person name="Oh C."/>
            <person name="Petel F.X."/>
            <person name="Roberts D."/>
            <person name="Schramm S."/>
            <person name="Schroeder M."/>
            <person name="Shogren T."/>
            <person name="Shroff N."/>
            <person name="Winant A."/>
            <person name="Yelton M.A."/>
            <person name="Botstein D."/>
            <person name="Davis R.W."/>
            <person name="Johnston M."/>
            <person name="Andrews S."/>
            <person name="Brinkman R."/>
            <person name="Cooper J."/>
            <person name="Ding H."/>
            <person name="Du Z."/>
            <person name="Favello A."/>
            <person name="Fulton L."/>
            <person name="Gattung S."/>
            <person name="Greco T."/>
            <person name="Hallsworth K."/>
            <person name="Hawkins J."/>
            <person name="Hillier L.W."/>
            <person name="Jier M."/>
            <person name="Johnson D."/>
            <person name="Johnston L."/>
            <person name="Kirsten J."/>
            <person name="Kucaba T."/>
            <person name="Langston Y."/>
            <person name="Latreille P."/>
            <person name="Le T."/>
            <person name="Mardis E."/>
            <person name="Menezes S."/>
            <person name="Miller N."/>
            <person name="Nhan M."/>
            <person name="Pauley A."/>
            <person name="Peluso D."/>
            <person name="Rifkin L."/>
            <person name="Riles L."/>
            <person name="Taich A."/>
            <person name="Trevaskis E."/>
            <person name="Vignati D."/>
            <person name="Wilcox L."/>
            <person name="Wohldman P."/>
            <person name="Vaudin M."/>
            <person name="Wilson R."/>
            <person name="Waterston R."/>
            <person name="Albermann K."/>
            <person name="Hani J."/>
            <person name="Heumann K."/>
            <person name="Kleine K."/>
            <person name="Mewes H.-W."/>
            <person name="Zollner A."/>
            <person name="Zaccaria P."/>
        </authorList>
    </citation>
    <scope>NUCLEOTIDE SEQUENCE [LARGE SCALE GENOMIC DNA]</scope>
    <source>
        <strain>ATCC 204508 / S288c</strain>
    </source>
</reference>
<reference key="3">
    <citation type="journal article" date="2014" name="G3 (Bethesda)">
        <title>The reference genome sequence of Saccharomyces cerevisiae: Then and now.</title>
        <authorList>
            <person name="Engel S.R."/>
            <person name="Dietrich F.S."/>
            <person name="Fisk D.G."/>
            <person name="Binkley G."/>
            <person name="Balakrishnan R."/>
            <person name="Costanzo M.C."/>
            <person name="Dwight S.S."/>
            <person name="Hitz B.C."/>
            <person name="Karra K."/>
            <person name="Nash R.S."/>
            <person name="Weng S."/>
            <person name="Wong E.D."/>
            <person name="Lloyd P."/>
            <person name="Skrzypek M.S."/>
            <person name="Miyasato S.R."/>
            <person name="Simison M."/>
            <person name="Cherry J.M."/>
        </authorList>
    </citation>
    <scope>GENOME REANNOTATION</scope>
    <source>
        <strain>ATCC 204508 / S288c</strain>
    </source>
</reference>
<reference key="4">
    <citation type="journal article" date="2007" name="Genome Res.">
        <title>Approaching a complete repository of sequence-verified protein-encoding clones for Saccharomyces cerevisiae.</title>
        <authorList>
            <person name="Hu Y."/>
            <person name="Rolfs A."/>
            <person name="Bhullar B."/>
            <person name="Murthy T.V.S."/>
            <person name="Zhu C."/>
            <person name="Berger M.F."/>
            <person name="Camargo A.A."/>
            <person name="Kelley F."/>
            <person name="McCarron S."/>
            <person name="Jepson D."/>
            <person name="Richardson A."/>
            <person name="Raphael J."/>
            <person name="Moreira D."/>
            <person name="Taycher E."/>
            <person name="Zuo D."/>
            <person name="Mohr S."/>
            <person name="Kane M.F."/>
            <person name="Williamson J."/>
            <person name="Simpson A.J.G."/>
            <person name="Bulyk M.L."/>
            <person name="Harlow E."/>
            <person name="Marsischky G."/>
            <person name="Kolodner R.D."/>
            <person name="LaBaer J."/>
        </authorList>
    </citation>
    <scope>NUCLEOTIDE SEQUENCE [GENOMIC DNA]</scope>
    <source>
        <strain>ATCC 204508 / S288c</strain>
    </source>
</reference>
<reference key="5">
    <citation type="journal article" date="1999" name="EMBO J.">
        <title>The RNA export factor Gle1p is located on the cytoplasmic fibrils of the NPC and physically interacts with the FG-nucleoporin Rip1p, the DEAD-box protein Rat8p/Dbp5p and a new protein Ymr255p.</title>
        <authorList>
            <person name="Strahm Y."/>
            <person name="Fahrenkrog B."/>
            <person name="Zenklusen D."/>
            <person name="Rychner E."/>
            <person name="Kantor J."/>
            <person name="Rosbach M."/>
            <person name="Stutz F."/>
        </authorList>
    </citation>
    <scope>FUNCTION</scope>
    <scope>INTERACTION WITH GLE1</scope>
</reference>
<reference key="6">
    <citation type="journal article" date="1999" name="EMBO J.">
        <title>Rat8p/Dbp5p is a shuttling transport factor that interacts with Rat7p/Nup159p and Gle1p and suppresses the mRNA export defect of xpo1-1 cells.</title>
        <authorList>
            <person name="Hodge C.A."/>
            <person name="Colot H.V."/>
            <person name="Stafford P."/>
            <person name="Cole C.N."/>
        </authorList>
    </citation>
    <scope>FUNCTION</scope>
    <scope>INTERACTION WITH CRM1 AND GFD1</scope>
</reference>
<reference key="7">
    <citation type="journal article" date="2000" name="J. Cell Biol.">
        <title>Binding of the Mex67p/Mtr2p heterodimer to FXFG, GLFG, and FG repeat nucleoporins is essential for nuclear mRNA export.</title>
        <authorList>
            <person name="Straesser K."/>
            <person name="Bassler J."/>
            <person name="Hurt E.C."/>
        </authorList>
    </citation>
    <scope>FUNCTION</scope>
    <scope>INTERACTION WITH MEX67/MTR2 HETERODIMER</scope>
</reference>
<reference key="8">
    <citation type="journal article" date="2000" name="J. Cell Biol.">
        <title>The yeast nuclear pore complex: composition, architecture, and transport mechanism.</title>
        <authorList>
            <person name="Rout M.P."/>
            <person name="Aitchison J.D."/>
            <person name="Suprapto A."/>
            <person name="Hjertaas K."/>
            <person name="Zhao Y."/>
            <person name="Chait B.T."/>
        </authorList>
    </citation>
    <scope>FUNCTION</scope>
    <scope>IDENTIFICATION IN THE NUCLEAR PORE COMPLEX</scope>
    <scope>SUBCELLULAR LOCATION</scope>
</reference>
<reference key="9">
    <citation type="journal article" date="2000" name="Mol. Cell. Biol.">
        <title>Nuclear export of heat shock and non-heat-shock mRNA occurs via similar pathways.</title>
        <authorList>
            <person name="Vainberg I.E."/>
            <person name="Dower K."/>
            <person name="Rosbash M."/>
        </authorList>
    </citation>
    <scope>FUNCTION IN MRNA EXPORT</scope>
</reference>
<reference key="10">
    <citation type="journal article" date="2001" name="J. Biol. Chem.">
        <title>Proteomic analysis of nucleoporin interacting proteins.</title>
        <authorList>
            <person name="Allen N.P."/>
            <person name="Huang L."/>
            <person name="Burlingame A."/>
            <person name="Rexach M."/>
        </authorList>
    </citation>
    <scope>FUNCTION</scope>
    <scope>NUCLEOPORIN INTERACTING PROTEINS</scope>
</reference>
<reference key="11">
    <citation type="journal article" date="2003" name="J. Biol. Chem.">
        <title>A gradient of affinity for the karyopherin Kap95p along the yeast nuclear pore complex.</title>
        <authorList>
            <person name="Pyhtila B."/>
            <person name="Rexach M."/>
        </authorList>
    </citation>
    <scope>FUNCTION</scope>
    <scope>AFFINITY GRADIENT FOR KARYOPHERIN KAP95</scope>
</reference>
<reference key="12">
    <citation type="journal article" date="2003" name="Proc. Natl. Acad. Sci. U.S.A.">
        <title>Disorder in the nuclear pore complex: the FG repeat regions of nucleoporins are natively unfolded.</title>
        <authorList>
            <person name="Denning D.P."/>
            <person name="Patel S.S."/>
            <person name="Uversky V."/>
            <person name="Fink A.L."/>
            <person name="Rexach M."/>
        </authorList>
    </citation>
    <scope>FUNCTION</scope>
    <scope>FG REPEAT STRUCTURE</scope>
</reference>
<reference key="13">
    <citation type="journal article" date="2004" name="Nat. Cell Biol.">
        <title>Minimal nuclear pore complexes define FG repeat domains essential for transport.</title>
        <authorList>
            <person name="Strawn L.A."/>
            <person name="Shen T.X."/>
            <person name="Shulga N."/>
            <person name="Goldfarb D.S."/>
            <person name="Wente S.R."/>
        </authorList>
    </citation>
    <scope>FUNCTION</scope>
    <scope>FG REPEATS IN NPC TRANSPORT</scope>
</reference>
<reference key="14">
    <citation type="journal article" date="2003" name="Dev. Cell">
        <title>Peering through the pore: nuclear pore complex structure, assembly, and function.</title>
        <authorList>
            <person name="Suntharalingam M."/>
            <person name="Wente S.R."/>
        </authorList>
    </citation>
    <scope>REVIEW</scope>
</reference>
<reference key="15">
    <citation type="journal article" date="2008" name="Mol. Cell. Proteomics">
        <title>A multidimensional chromatography technology for in-depth phosphoproteome analysis.</title>
        <authorList>
            <person name="Albuquerque C.P."/>
            <person name="Smolka M.B."/>
            <person name="Payne S.H."/>
            <person name="Bafna V."/>
            <person name="Eng J."/>
            <person name="Zhou H."/>
        </authorList>
    </citation>
    <scope>PHOSPHORYLATION [LARGE SCALE ANALYSIS] AT SER-137 AND SER-298</scope>
    <scope>IDENTIFICATION BY MASS SPECTROMETRY [LARGE SCALE ANALYSIS]</scope>
</reference>
<reference key="16">
    <citation type="journal article" date="2009" name="Science">
        <title>Global analysis of Cdk1 substrate phosphorylation sites provides insights into evolution.</title>
        <authorList>
            <person name="Holt L.J."/>
            <person name="Tuch B.B."/>
            <person name="Villen J."/>
            <person name="Johnson A.D."/>
            <person name="Gygi S.P."/>
            <person name="Morgan D.O."/>
        </authorList>
    </citation>
    <scope>IDENTIFICATION BY MASS SPECTROMETRY [LARGE SCALE ANALYSIS]</scope>
</reference>
<feature type="chain" id="PRO_0000204866" description="Nucleoporin NUP42">
    <location>
        <begin position="1"/>
        <end position="430"/>
    </location>
</feature>
<feature type="repeat" description="SXFG 1">
    <location>
        <begin position="2"/>
        <end position="5"/>
    </location>
</feature>
<feature type="repeat" description="SAFGXPXFG 1">
    <location>
        <begin position="38"/>
        <end position="46"/>
    </location>
</feature>
<feature type="repeat" description="SAFGXPXFG 2">
    <location>
        <begin position="58"/>
        <end position="66"/>
    </location>
</feature>
<feature type="repeat" description="SXFG 2">
    <location>
        <begin position="78"/>
        <end position="81"/>
    </location>
</feature>
<feature type="repeat" description="SAFGXPXFG 3">
    <location>
        <begin position="90"/>
        <end position="98"/>
    </location>
</feature>
<feature type="repeat" description="SAFGXPXFG 4">
    <location>
        <begin position="112"/>
        <end position="120"/>
    </location>
</feature>
<feature type="repeat" description="FG 1">
    <location>
        <begin position="124"/>
        <end position="125"/>
    </location>
</feature>
<feature type="repeat" description="FG 2">
    <location>
        <begin position="134"/>
        <end position="135"/>
    </location>
</feature>
<feature type="repeat" description="SAFGXPXFG 5">
    <location>
        <begin position="143"/>
        <end position="151"/>
    </location>
</feature>
<feature type="repeat" description="SXFG 3">
    <location>
        <begin position="168"/>
        <end position="171"/>
    </location>
</feature>
<feature type="repeat" description="SXFG 4">
    <location>
        <begin position="182"/>
        <end position="185"/>
    </location>
</feature>
<feature type="repeat" description="SAFGXPXFG 6">
    <location>
        <begin position="200"/>
        <end position="208"/>
    </location>
</feature>
<feature type="repeat" description="SXFG 5">
    <location>
        <begin position="215"/>
        <end position="218"/>
    </location>
</feature>
<feature type="repeat" description="SXFG 6">
    <location>
        <begin position="232"/>
        <end position="235"/>
    </location>
</feature>
<feature type="repeat" description="SXFG 7">
    <location>
        <begin position="259"/>
        <end position="262"/>
    </location>
</feature>
<feature type="repeat" description="SXFG 8">
    <location>
        <begin position="277"/>
        <end position="280"/>
    </location>
</feature>
<feature type="repeat" description="FG 3">
    <location>
        <begin position="296"/>
        <end position="297"/>
    </location>
</feature>
<feature type="repeat" description="SXFG 9">
    <location>
        <begin position="312"/>
        <end position="315"/>
    </location>
</feature>
<feature type="repeat" description="FG 4">
    <location>
        <begin position="319"/>
        <end position="322"/>
    </location>
</feature>
<feature type="repeat" description="FG 5">
    <location>
        <begin position="339"/>
        <end position="340"/>
    </location>
</feature>
<feature type="repeat" description="FG 6">
    <location>
        <begin position="361"/>
        <end position="364"/>
    </location>
</feature>
<feature type="region of interest" description="Disordered" evidence="1">
    <location>
        <begin position="1"/>
        <end position="68"/>
    </location>
</feature>
<feature type="region of interest" description="Interactions with CRM1 and GFD1">
    <location>
        <begin position="121"/>
        <end position="230"/>
    </location>
</feature>
<feature type="region of interest" description="Disordered" evidence="1">
    <location>
        <begin position="180"/>
        <end position="294"/>
    </location>
</feature>
<feature type="region of interest" description="Disordered" evidence="1">
    <location>
        <begin position="319"/>
        <end position="346"/>
    </location>
</feature>
<feature type="region of interest" description="Interaction with GLE1" evidence="3">
    <location>
        <begin position="365"/>
        <end position="430"/>
    </location>
</feature>
<feature type="compositionally biased region" description="Polar residues" evidence="1">
    <location>
        <begin position="15"/>
        <end position="36"/>
    </location>
</feature>
<feature type="compositionally biased region" description="Low complexity" evidence="1">
    <location>
        <begin position="45"/>
        <end position="68"/>
    </location>
</feature>
<feature type="compositionally biased region" description="Low complexity" evidence="1">
    <location>
        <begin position="186"/>
        <end position="201"/>
    </location>
</feature>
<feature type="compositionally biased region" description="Polar residues" evidence="1">
    <location>
        <begin position="209"/>
        <end position="230"/>
    </location>
</feature>
<feature type="compositionally biased region" description="Polar residues" evidence="1">
    <location>
        <begin position="237"/>
        <end position="252"/>
    </location>
</feature>
<feature type="compositionally biased region" description="Polar residues" evidence="1">
    <location>
        <begin position="260"/>
        <end position="285"/>
    </location>
</feature>
<feature type="compositionally biased region" description="Polar residues" evidence="1">
    <location>
        <begin position="323"/>
        <end position="346"/>
    </location>
</feature>
<feature type="modified residue" description="Phosphoserine" evidence="12">
    <location>
        <position position="137"/>
    </location>
</feature>
<feature type="modified residue" description="Phosphoserine" evidence="12">
    <location>
        <position position="298"/>
    </location>
</feature>
<feature type="sequence conflict" description="In Ref. 1; AAA87033." evidence="11" ref="1">
    <original>K</original>
    <variation>Q</variation>
    <location>
        <position position="331"/>
    </location>
</feature>
<feature type="sequence conflict" description="In Ref. 1; AAA87033." evidence="11" ref="1">
    <original>V</original>
    <variation>D</variation>
    <location>
        <position position="419"/>
    </location>
</feature>
<feature type="helix" evidence="13">
    <location>
        <begin position="397"/>
        <end position="400"/>
    </location>
</feature>
<feature type="helix" evidence="13">
    <location>
        <begin position="403"/>
        <end position="410"/>
    </location>
</feature>
<feature type="helix" evidence="13">
    <location>
        <begin position="426"/>
        <end position="428"/>
    </location>
</feature>
<proteinExistence type="evidence at protein level"/>
<dbReference type="EMBL" id="U30614">
    <property type="protein sequence ID" value="AAA87033.1"/>
    <property type="molecule type" value="Genomic_DNA"/>
</dbReference>
<dbReference type="EMBL" id="Z48784">
    <property type="protein sequence ID" value="CAA88706.1"/>
    <property type="molecule type" value="Genomic_DNA"/>
</dbReference>
<dbReference type="EMBL" id="AY723779">
    <property type="protein sequence ID" value="AAU09696.1"/>
    <property type="molecule type" value="Genomic_DNA"/>
</dbReference>
<dbReference type="EMBL" id="BK006938">
    <property type="protein sequence ID" value="DAA12035.1"/>
    <property type="molecule type" value="Genomic_DNA"/>
</dbReference>
<dbReference type="PIR" id="S52700">
    <property type="entry name" value="S52700"/>
</dbReference>
<dbReference type="RefSeq" id="NP_010478.3">
    <property type="nucleotide sequence ID" value="NM_001180500.3"/>
</dbReference>
<dbReference type="PDB" id="6B4E">
    <property type="method" value="X-ray"/>
    <property type="resolution" value="1.75 A"/>
    <property type="chains" value="C/D=397-430"/>
</dbReference>
<dbReference type="PDBsum" id="6B4E"/>
<dbReference type="SMR" id="P49686"/>
<dbReference type="BioGRID" id="32245">
    <property type="interactions" value="132"/>
</dbReference>
<dbReference type="ComplexPortal" id="CPX-824">
    <property type="entry name" value="Nuclear pore complex"/>
</dbReference>
<dbReference type="DIP" id="DIP-2313N"/>
<dbReference type="FunCoup" id="P49686">
    <property type="interactions" value="184"/>
</dbReference>
<dbReference type="IntAct" id="P49686">
    <property type="interactions" value="17"/>
</dbReference>
<dbReference type="MINT" id="P49686"/>
<dbReference type="STRING" id="4932.YDR192C"/>
<dbReference type="TCDB" id="1.I.1.1.1">
    <property type="family name" value="the nuclear pore complex (npc) family"/>
</dbReference>
<dbReference type="GlyGen" id="P49686">
    <property type="glycosylation" value="1 site, 1 O-linked glycan (1 site)"/>
</dbReference>
<dbReference type="iPTMnet" id="P49686"/>
<dbReference type="PaxDb" id="4932-YDR192C"/>
<dbReference type="PeptideAtlas" id="P49686"/>
<dbReference type="EnsemblFungi" id="YDR192C_mRNA">
    <property type="protein sequence ID" value="YDR192C"/>
    <property type="gene ID" value="YDR192C"/>
</dbReference>
<dbReference type="GeneID" id="851774"/>
<dbReference type="KEGG" id="sce:YDR192C"/>
<dbReference type="AGR" id="SGD:S000002600"/>
<dbReference type="SGD" id="S000002600">
    <property type="gene designation" value="NUP42"/>
</dbReference>
<dbReference type="VEuPathDB" id="FungiDB:YDR192C"/>
<dbReference type="eggNOG" id="KOG0845">
    <property type="taxonomic scope" value="Eukaryota"/>
</dbReference>
<dbReference type="HOGENOM" id="CLU_638015_0_0_1"/>
<dbReference type="InParanoid" id="P49686"/>
<dbReference type="OMA" id="GTANTMT"/>
<dbReference type="OrthoDB" id="20729at2759"/>
<dbReference type="BioCyc" id="YEAST:G3O-29780-MONOMER"/>
<dbReference type="Reactome" id="R-SCE-159236">
    <property type="pathway name" value="Transport of Mature mRNA derived from an Intron-Containing Transcript"/>
</dbReference>
<dbReference type="Reactome" id="R-SCE-3371453">
    <property type="pathway name" value="Regulation of HSF1-mediated heat shock response"/>
</dbReference>
<dbReference type="Reactome" id="R-SCE-4085377">
    <property type="pathway name" value="SUMOylation of SUMOylation proteins"/>
</dbReference>
<dbReference type="Reactome" id="R-SCE-4551638">
    <property type="pathway name" value="SUMOylation of chromatin organization proteins"/>
</dbReference>
<dbReference type="Reactome" id="R-SCE-4570464">
    <property type="pathway name" value="SUMOylation of RNA binding proteins"/>
</dbReference>
<dbReference type="BioGRID-ORCS" id="851774">
    <property type="hits" value="9 hits in 10 CRISPR screens"/>
</dbReference>
<dbReference type="PRO" id="PR:P49686"/>
<dbReference type="Proteomes" id="UP000002311">
    <property type="component" value="Chromosome IV"/>
</dbReference>
<dbReference type="RNAct" id="P49686">
    <property type="molecule type" value="protein"/>
</dbReference>
<dbReference type="GO" id="GO:0005635">
    <property type="term" value="C:nuclear envelope"/>
    <property type="evidence" value="ECO:0000303"/>
    <property type="project" value="ComplexPortal"/>
</dbReference>
<dbReference type="GO" id="GO:0031965">
    <property type="term" value="C:nuclear membrane"/>
    <property type="evidence" value="ECO:0007669"/>
    <property type="project" value="UniProtKB-SubCell"/>
</dbReference>
<dbReference type="GO" id="GO:0005643">
    <property type="term" value="C:nuclear pore"/>
    <property type="evidence" value="ECO:0000314"/>
    <property type="project" value="SGD"/>
</dbReference>
<dbReference type="GO" id="GO:0044613">
    <property type="term" value="C:nuclear pore central transport channel"/>
    <property type="evidence" value="ECO:0000314"/>
    <property type="project" value="SGD"/>
</dbReference>
<dbReference type="GO" id="GO:0044614">
    <property type="term" value="C:nuclear pore cytoplasmic filaments"/>
    <property type="evidence" value="ECO:0000314"/>
    <property type="project" value="SGD"/>
</dbReference>
<dbReference type="GO" id="GO:0017056">
    <property type="term" value="F:structural constituent of nuclear pore"/>
    <property type="evidence" value="ECO:0000316"/>
    <property type="project" value="SGD"/>
</dbReference>
<dbReference type="GO" id="GO:0031990">
    <property type="term" value="P:mRNA export from nucleus in response to heat stress"/>
    <property type="evidence" value="ECO:0000315"/>
    <property type="project" value="SGD"/>
</dbReference>
<dbReference type="GO" id="GO:0006607">
    <property type="term" value="P:NLS-bearing protein import into nucleus"/>
    <property type="evidence" value="ECO:0000316"/>
    <property type="project" value="SGD"/>
</dbReference>
<dbReference type="GO" id="GO:0006913">
    <property type="term" value="P:nucleocytoplasmic transport"/>
    <property type="evidence" value="ECO:0000303"/>
    <property type="project" value="ComplexPortal"/>
</dbReference>
<dbReference type="GO" id="GO:0016973">
    <property type="term" value="P:poly(A)+ mRNA export from nucleus"/>
    <property type="evidence" value="ECO:0000316"/>
    <property type="project" value="SGD"/>
</dbReference>
<dbReference type="GO" id="GO:0000973">
    <property type="term" value="P:post-transcriptional tethering of RNA polymerase II gene DNA at nuclear periphery"/>
    <property type="evidence" value="ECO:0000315"/>
    <property type="project" value="SGD"/>
</dbReference>
<dbReference type="GO" id="GO:0000972">
    <property type="term" value="P:transcription-dependent tethering of RNA polymerase II gene DNA at nuclear periphery"/>
    <property type="evidence" value="ECO:0000315"/>
    <property type="project" value="SGD"/>
</dbReference>
<dbReference type="InterPro" id="IPR051767">
    <property type="entry name" value="Nucleoporin_NUP42"/>
</dbReference>
<dbReference type="PANTHER" id="PTHR46527:SF1">
    <property type="entry name" value="NUCLEOPORIN NUP42"/>
    <property type="match status" value="1"/>
</dbReference>
<dbReference type="PANTHER" id="PTHR46527">
    <property type="entry name" value="NUCLEOPORIN-LIKE PROTEIN 2"/>
    <property type="match status" value="1"/>
</dbReference>
<name>NUP42_YEAST</name>
<protein>
    <recommendedName>
        <fullName>Nucleoporin NUP42</fullName>
    </recommendedName>
    <alternativeName>
        <fullName>Nuclear pore protein NUP42</fullName>
    </alternativeName>
</protein>